<accession>A7MX55</accession>
<feature type="chain" id="PRO_1000025401" description="Co-chaperonin GroES">
    <location>
        <begin position="1"/>
        <end position="96"/>
    </location>
</feature>
<gene>
    <name evidence="1" type="primary">groES</name>
    <name evidence="1" type="synonym">groS</name>
    <name type="ordered locus">VIBHAR_00143</name>
</gene>
<keyword id="KW-0143">Chaperone</keyword>
<keyword id="KW-0963">Cytoplasm</keyword>
<organism>
    <name type="scientific">Vibrio campbellii (strain ATCC BAA-1116)</name>
    <dbReference type="NCBI Taxonomy" id="2902295"/>
    <lineage>
        <taxon>Bacteria</taxon>
        <taxon>Pseudomonadati</taxon>
        <taxon>Pseudomonadota</taxon>
        <taxon>Gammaproteobacteria</taxon>
        <taxon>Vibrionales</taxon>
        <taxon>Vibrionaceae</taxon>
        <taxon>Vibrio</taxon>
    </lineage>
</organism>
<evidence type="ECO:0000255" key="1">
    <source>
        <dbReference type="HAMAP-Rule" id="MF_00580"/>
    </source>
</evidence>
<reference key="1">
    <citation type="submission" date="2007-08" db="EMBL/GenBank/DDBJ databases">
        <authorList>
            <consortium name="The Vibrio harveyi Genome Sequencing Project"/>
            <person name="Bassler B."/>
            <person name="Clifton S.W."/>
            <person name="Fulton L."/>
            <person name="Delehaunty K."/>
            <person name="Fronick C."/>
            <person name="Harrison M."/>
            <person name="Markivic C."/>
            <person name="Fulton R."/>
            <person name="Tin-Wollam A.-M."/>
            <person name="Shah N."/>
            <person name="Pepin K."/>
            <person name="Nash W."/>
            <person name="Thiruvilangam P."/>
            <person name="Bhonagiri V."/>
            <person name="Waters C."/>
            <person name="Tu K.C."/>
            <person name="Irgon J."/>
            <person name="Wilson R.K."/>
        </authorList>
    </citation>
    <scope>NUCLEOTIDE SEQUENCE [LARGE SCALE GENOMIC DNA]</scope>
    <source>
        <strain>ATCC BAA-1116 / BB120</strain>
    </source>
</reference>
<comment type="function">
    <text evidence="1">Together with the chaperonin GroEL, plays an essential role in assisting protein folding. The GroEL-GroES system forms a nano-cage that allows encapsulation of the non-native substrate proteins and provides a physical environment optimized to promote and accelerate protein folding. GroES binds to the apical surface of the GroEL ring, thereby capping the opening of the GroEL channel.</text>
</comment>
<comment type="subunit">
    <text evidence="1">Heptamer of 7 subunits arranged in a ring. Interacts with the chaperonin GroEL.</text>
</comment>
<comment type="subcellular location">
    <subcellularLocation>
        <location evidence="1">Cytoplasm</location>
    </subcellularLocation>
</comment>
<comment type="similarity">
    <text evidence="1">Belongs to the GroES chaperonin family.</text>
</comment>
<proteinExistence type="inferred from homology"/>
<name>CH10_VIBC1</name>
<protein>
    <recommendedName>
        <fullName evidence="1">Co-chaperonin GroES</fullName>
    </recommendedName>
    <alternativeName>
        <fullName evidence="1">10 kDa chaperonin</fullName>
    </alternativeName>
    <alternativeName>
        <fullName evidence="1">Chaperonin-10</fullName>
        <shortName evidence="1">Cpn10</shortName>
    </alternativeName>
</protein>
<dbReference type="EMBL" id="CP000789">
    <property type="protein sequence ID" value="ABU69191.1"/>
    <property type="molecule type" value="Genomic_DNA"/>
</dbReference>
<dbReference type="RefSeq" id="WP_005381516.1">
    <property type="nucleotide sequence ID" value="NC_022269.1"/>
</dbReference>
<dbReference type="SMR" id="A7MX55"/>
<dbReference type="KEGG" id="vha:VIBHAR_00143"/>
<dbReference type="PATRIC" id="fig|338187.25.peg.2390"/>
<dbReference type="Proteomes" id="UP000008152">
    <property type="component" value="Chromosome I"/>
</dbReference>
<dbReference type="GO" id="GO:0005737">
    <property type="term" value="C:cytoplasm"/>
    <property type="evidence" value="ECO:0007669"/>
    <property type="project" value="UniProtKB-SubCell"/>
</dbReference>
<dbReference type="GO" id="GO:0005524">
    <property type="term" value="F:ATP binding"/>
    <property type="evidence" value="ECO:0007669"/>
    <property type="project" value="InterPro"/>
</dbReference>
<dbReference type="GO" id="GO:0046872">
    <property type="term" value="F:metal ion binding"/>
    <property type="evidence" value="ECO:0007669"/>
    <property type="project" value="TreeGrafter"/>
</dbReference>
<dbReference type="GO" id="GO:0044183">
    <property type="term" value="F:protein folding chaperone"/>
    <property type="evidence" value="ECO:0007669"/>
    <property type="project" value="InterPro"/>
</dbReference>
<dbReference type="GO" id="GO:0051087">
    <property type="term" value="F:protein-folding chaperone binding"/>
    <property type="evidence" value="ECO:0007669"/>
    <property type="project" value="TreeGrafter"/>
</dbReference>
<dbReference type="GO" id="GO:0051082">
    <property type="term" value="F:unfolded protein binding"/>
    <property type="evidence" value="ECO:0007669"/>
    <property type="project" value="TreeGrafter"/>
</dbReference>
<dbReference type="GO" id="GO:0051085">
    <property type="term" value="P:chaperone cofactor-dependent protein refolding"/>
    <property type="evidence" value="ECO:0007669"/>
    <property type="project" value="TreeGrafter"/>
</dbReference>
<dbReference type="CDD" id="cd00320">
    <property type="entry name" value="cpn10"/>
    <property type="match status" value="1"/>
</dbReference>
<dbReference type="FunFam" id="2.30.33.40:FF:000001">
    <property type="entry name" value="10 kDa chaperonin"/>
    <property type="match status" value="1"/>
</dbReference>
<dbReference type="Gene3D" id="2.30.33.40">
    <property type="entry name" value="GroES chaperonin"/>
    <property type="match status" value="1"/>
</dbReference>
<dbReference type="HAMAP" id="MF_00580">
    <property type="entry name" value="CH10"/>
    <property type="match status" value="1"/>
</dbReference>
<dbReference type="InterPro" id="IPR020818">
    <property type="entry name" value="Chaperonin_GroES"/>
</dbReference>
<dbReference type="InterPro" id="IPR037124">
    <property type="entry name" value="Chaperonin_GroES_sf"/>
</dbReference>
<dbReference type="InterPro" id="IPR018369">
    <property type="entry name" value="Chaprnonin_Cpn10_CS"/>
</dbReference>
<dbReference type="InterPro" id="IPR011032">
    <property type="entry name" value="GroES-like_sf"/>
</dbReference>
<dbReference type="NCBIfam" id="NF001526">
    <property type="entry name" value="PRK00364.1-1"/>
    <property type="match status" value="1"/>
</dbReference>
<dbReference type="NCBIfam" id="NF001527">
    <property type="entry name" value="PRK00364.1-2"/>
    <property type="match status" value="1"/>
</dbReference>
<dbReference type="NCBIfam" id="NF001531">
    <property type="entry name" value="PRK00364.2-2"/>
    <property type="match status" value="1"/>
</dbReference>
<dbReference type="PANTHER" id="PTHR10772">
    <property type="entry name" value="10 KDA HEAT SHOCK PROTEIN"/>
    <property type="match status" value="1"/>
</dbReference>
<dbReference type="PANTHER" id="PTHR10772:SF58">
    <property type="entry name" value="CO-CHAPERONIN GROES"/>
    <property type="match status" value="1"/>
</dbReference>
<dbReference type="Pfam" id="PF00166">
    <property type="entry name" value="Cpn10"/>
    <property type="match status" value="1"/>
</dbReference>
<dbReference type="PRINTS" id="PR00297">
    <property type="entry name" value="CHAPERONIN10"/>
</dbReference>
<dbReference type="SMART" id="SM00883">
    <property type="entry name" value="Cpn10"/>
    <property type="match status" value="1"/>
</dbReference>
<dbReference type="SUPFAM" id="SSF50129">
    <property type="entry name" value="GroES-like"/>
    <property type="match status" value="1"/>
</dbReference>
<dbReference type="PROSITE" id="PS00681">
    <property type="entry name" value="CHAPERONINS_CPN10"/>
    <property type="match status" value="1"/>
</dbReference>
<sequence length="96" mass="10250">MNIRPLHDRVIVERKEVESKSAGGIVLTGSAAEKSTRGVVLAVGKGRILENGTVLPLDVKVGDTVIFAEGYGTKTEKIDGKEVLVMSENDIMAIVE</sequence>